<keyword id="KW-0997">Cell inner membrane</keyword>
<keyword id="KW-1003">Cell membrane</keyword>
<keyword id="KW-0350">Heme biosynthesis</keyword>
<keyword id="KW-0472">Membrane</keyword>
<keyword id="KW-0808">Transferase</keyword>
<keyword id="KW-0812">Transmembrane</keyword>
<keyword id="KW-1133">Transmembrane helix</keyword>
<organism>
    <name type="scientific">Burkholderia cenocepacia (strain ATCC BAA-245 / DSM 16553 / LMG 16656 / NCTC 13227 / J2315 / CF5610)</name>
    <name type="common">Burkholderia cepacia (strain J2315)</name>
    <dbReference type="NCBI Taxonomy" id="216591"/>
    <lineage>
        <taxon>Bacteria</taxon>
        <taxon>Pseudomonadati</taxon>
        <taxon>Pseudomonadota</taxon>
        <taxon>Betaproteobacteria</taxon>
        <taxon>Burkholderiales</taxon>
        <taxon>Burkholderiaceae</taxon>
        <taxon>Burkholderia</taxon>
        <taxon>Burkholderia cepacia complex</taxon>
    </lineage>
</organism>
<gene>
    <name evidence="1" type="primary">ctaB</name>
    <name type="ordered locus">BceJ2315_07520</name>
    <name type="ORF">BCAL0759</name>
</gene>
<name>COXX_BURCJ</name>
<sequence>MQSTLSQSPGSRFSQYMALTKPRVTQLAVFCAVIGMFLATPGMVPWHVLIGGTVGIWLLAGAAFAINCLVEQKIDAMMRRTAWRPSARGEITTPQILLFSAVLGSVGAWTLYTFTNPLTMWLTIATFVGYAVIYTLLLKPMTPQNIVIGGASGAMPPALGWAAVTGAVPGDAWILVLIIFVWTPPHFWVLALYRRKDYENAGLPMLPVTHGEKFTRLHILLYTVILFAVTLMPFISGMSGAVYLTSAVLLGAVFLAYAWKIHRDYSDELARKAFRYSIVYLSLLFAALLVDHYARPLLGV</sequence>
<evidence type="ECO:0000255" key="1">
    <source>
        <dbReference type="HAMAP-Rule" id="MF_00154"/>
    </source>
</evidence>
<feature type="chain" id="PRO_1000096918" description="Protoheme IX farnesyltransferase">
    <location>
        <begin position="1"/>
        <end position="300"/>
    </location>
</feature>
<feature type="transmembrane region" description="Helical" evidence="1">
    <location>
        <begin position="24"/>
        <end position="44"/>
    </location>
</feature>
<feature type="transmembrane region" description="Helical" evidence="1">
    <location>
        <begin position="46"/>
        <end position="66"/>
    </location>
</feature>
<feature type="transmembrane region" description="Helical" evidence="1">
    <location>
        <begin position="94"/>
        <end position="114"/>
    </location>
</feature>
<feature type="transmembrane region" description="Helical" evidence="1">
    <location>
        <begin position="118"/>
        <end position="138"/>
    </location>
</feature>
<feature type="transmembrane region" description="Helical" evidence="1">
    <location>
        <begin position="146"/>
        <end position="166"/>
    </location>
</feature>
<feature type="transmembrane region" description="Helical" evidence="1">
    <location>
        <begin position="172"/>
        <end position="192"/>
    </location>
</feature>
<feature type="transmembrane region" description="Helical" evidence="1">
    <location>
        <begin position="217"/>
        <end position="237"/>
    </location>
</feature>
<feature type="transmembrane region" description="Helical" evidence="1">
    <location>
        <begin position="239"/>
        <end position="259"/>
    </location>
</feature>
<feature type="transmembrane region" description="Helical" evidence="1">
    <location>
        <begin position="278"/>
        <end position="298"/>
    </location>
</feature>
<proteinExistence type="inferred from homology"/>
<comment type="function">
    <text evidence="1">Converts heme B (protoheme IX) to heme O by substitution of the vinyl group on carbon 2 of heme B porphyrin ring with a hydroxyethyl farnesyl side group.</text>
</comment>
<comment type="catalytic activity">
    <reaction evidence="1">
        <text>heme b + (2E,6E)-farnesyl diphosphate + H2O = Fe(II)-heme o + diphosphate</text>
        <dbReference type="Rhea" id="RHEA:28070"/>
        <dbReference type="ChEBI" id="CHEBI:15377"/>
        <dbReference type="ChEBI" id="CHEBI:33019"/>
        <dbReference type="ChEBI" id="CHEBI:60344"/>
        <dbReference type="ChEBI" id="CHEBI:60530"/>
        <dbReference type="ChEBI" id="CHEBI:175763"/>
        <dbReference type="EC" id="2.5.1.141"/>
    </reaction>
</comment>
<comment type="pathway">
    <text evidence="1">Porphyrin-containing compound metabolism; heme O biosynthesis; heme O from protoheme: step 1/1.</text>
</comment>
<comment type="subcellular location">
    <subcellularLocation>
        <location evidence="1">Cell inner membrane</location>
        <topology evidence="1">Multi-pass membrane protein</topology>
    </subcellularLocation>
</comment>
<comment type="miscellaneous">
    <text evidence="1">Carbon 2 of the heme B porphyrin ring is defined according to the Fischer nomenclature.</text>
</comment>
<comment type="similarity">
    <text evidence="1">Belongs to the UbiA prenyltransferase family. Protoheme IX farnesyltransferase subfamily.</text>
</comment>
<accession>B4EA84</accession>
<dbReference type="EC" id="2.5.1.141" evidence="1"/>
<dbReference type="EMBL" id="AM747720">
    <property type="protein sequence ID" value="CAR51067.1"/>
    <property type="molecule type" value="Genomic_DNA"/>
</dbReference>
<dbReference type="SMR" id="B4EA84"/>
<dbReference type="KEGG" id="bcj:BCAL0759"/>
<dbReference type="eggNOG" id="COG0109">
    <property type="taxonomic scope" value="Bacteria"/>
</dbReference>
<dbReference type="HOGENOM" id="CLU_029631_0_2_4"/>
<dbReference type="BioCyc" id="BCEN216591:G1G1V-850-MONOMER"/>
<dbReference type="UniPathway" id="UPA00834">
    <property type="reaction ID" value="UER00712"/>
</dbReference>
<dbReference type="Proteomes" id="UP000001035">
    <property type="component" value="Chromosome 1"/>
</dbReference>
<dbReference type="GO" id="GO:0005886">
    <property type="term" value="C:plasma membrane"/>
    <property type="evidence" value="ECO:0007669"/>
    <property type="project" value="UniProtKB-SubCell"/>
</dbReference>
<dbReference type="GO" id="GO:0008495">
    <property type="term" value="F:protoheme IX farnesyltransferase activity"/>
    <property type="evidence" value="ECO:0007669"/>
    <property type="project" value="UniProtKB-UniRule"/>
</dbReference>
<dbReference type="GO" id="GO:0048034">
    <property type="term" value="P:heme O biosynthetic process"/>
    <property type="evidence" value="ECO:0007669"/>
    <property type="project" value="UniProtKB-UniRule"/>
</dbReference>
<dbReference type="CDD" id="cd13957">
    <property type="entry name" value="PT_UbiA_Cox10"/>
    <property type="match status" value="1"/>
</dbReference>
<dbReference type="Gene3D" id="1.10.357.140">
    <property type="entry name" value="UbiA prenyltransferase"/>
    <property type="match status" value="1"/>
</dbReference>
<dbReference type="HAMAP" id="MF_00154">
    <property type="entry name" value="CyoE_CtaB"/>
    <property type="match status" value="1"/>
</dbReference>
<dbReference type="InterPro" id="IPR006369">
    <property type="entry name" value="Protohaem_IX_farnesylTrfase"/>
</dbReference>
<dbReference type="InterPro" id="IPR000537">
    <property type="entry name" value="UbiA_prenyltransferase"/>
</dbReference>
<dbReference type="InterPro" id="IPR030470">
    <property type="entry name" value="UbiA_prenylTrfase_CS"/>
</dbReference>
<dbReference type="InterPro" id="IPR044878">
    <property type="entry name" value="UbiA_sf"/>
</dbReference>
<dbReference type="NCBIfam" id="TIGR01473">
    <property type="entry name" value="cyoE_ctaB"/>
    <property type="match status" value="1"/>
</dbReference>
<dbReference type="NCBIfam" id="NF003349">
    <property type="entry name" value="PRK04375.1-2"/>
    <property type="match status" value="1"/>
</dbReference>
<dbReference type="PANTHER" id="PTHR43448:SF7">
    <property type="entry name" value="4-HYDROXYBENZOATE SOLANESYLTRANSFERASE"/>
    <property type="match status" value="1"/>
</dbReference>
<dbReference type="PANTHER" id="PTHR43448">
    <property type="entry name" value="PROTOHEME IX FARNESYLTRANSFERASE, MITOCHONDRIAL"/>
    <property type="match status" value="1"/>
</dbReference>
<dbReference type="Pfam" id="PF01040">
    <property type="entry name" value="UbiA"/>
    <property type="match status" value="1"/>
</dbReference>
<dbReference type="PROSITE" id="PS00943">
    <property type="entry name" value="UBIA"/>
    <property type="match status" value="1"/>
</dbReference>
<protein>
    <recommendedName>
        <fullName evidence="1">Protoheme IX farnesyltransferase</fullName>
        <ecNumber evidence="1">2.5.1.141</ecNumber>
    </recommendedName>
    <alternativeName>
        <fullName evidence="1">Heme B farnesyltransferase</fullName>
    </alternativeName>
    <alternativeName>
        <fullName evidence="1">Heme O synthase</fullName>
    </alternativeName>
</protein>
<reference key="1">
    <citation type="journal article" date="2009" name="J. Bacteriol.">
        <title>The genome of Burkholderia cenocepacia J2315, an epidemic pathogen of cystic fibrosis patients.</title>
        <authorList>
            <person name="Holden M.T."/>
            <person name="Seth-Smith H.M."/>
            <person name="Crossman L.C."/>
            <person name="Sebaihia M."/>
            <person name="Bentley S.D."/>
            <person name="Cerdeno-Tarraga A.M."/>
            <person name="Thomson N.R."/>
            <person name="Bason N."/>
            <person name="Quail M.A."/>
            <person name="Sharp S."/>
            <person name="Cherevach I."/>
            <person name="Churcher C."/>
            <person name="Goodhead I."/>
            <person name="Hauser H."/>
            <person name="Holroyd N."/>
            <person name="Mungall K."/>
            <person name="Scott P."/>
            <person name="Walker D."/>
            <person name="White B."/>
            <person name="Rose H."/>
            <person name="Iversen P."/>
            <person name="Mil-Homens D."/>
            <person name="Rocha E.P."/>
            <person name="Fialho A.M."/>
            <person name="Baldwin A."/>
            <person name="Dowson C."/>
            <person name="Barrell B.G."/>
            <person name="Govan J.R."/>
            <person name="Vandamme P."/>
            <person name="Hart C.A."/>
            <person name="Mahenthiralingam E."/>
            <person name="Parkhill J."/>
        </authorList>
    </citation>
    <scope>NUCLEOTIDE SEQUENCE [LARGE SCALE GENOMIC DNA]</scope>
    <source>
        <strain>ATCC BAA-245 / DSM 16553 / LMG 16656 / NCTC 13227 / J2315 / CF5610</strain>
    </source>
</reference>